<sequence>MTKELSIGSVKMGGGRLLVLIAGPCVIESEEATLRHAERLMTICNGLGMPLIFKSSYDKANRTSINAFRGPGMDEGLRILSKVKESLGIPVLSDIHSIEQVAPAAQVLDVLQIPAFLCRQTDLVVAAAKTGKVVNVKKGQFLAPWDMRNVVGKVAASGNENIILTERGASFGYNNLVVDMRSFPVMRSYGYPVVFDATHSVQLPGGQGESSGGQREFVETLSRAAVATGIDGIFMEVHEDPSCALCDGPNSIPLAELPALLKRLQALDAVVR</sequence>
<reference key="1">
    <citation type="submission" date="2008-05" db="EMBL/GenBank/DDBJ databases">
        <title>Complete sequence of chromosome of Geobacter lovleyi SZ.</title>
        <authorList>
            <consortium name="US DOE Joint Genome Institute"/>
            <person name="Lucas S."/>
            <person name="Copeland A."/>
            <person name="Lapidus A."/>
            <person name="Glavina del Rio T."/>
            <person name="Dalin E."/>
            <person name="Tice H."/>
            <person name="Bruce D."/>
            <person name="Goodwin L."/>
            <person name="Pitluck S."/>
            <person name="Chertkov O."/>
            <person name="Meincke L."/>
            <person name="Brettin T."/>
            <person name="Detter J.C."/>
            <person name="Han C."/>
            <person name="Tapia R."/>
            <person name="Kuske C.R."/>
            <person name="Schmutz J."/>
            <person name="Larimer F."/>
            <person name="Land M."/>
            <person name="Hauser L."/>
            <person name="Kyrpides N."/>
            <person name="Mikhailova N."/>
            <person name="Sung Y."/>
            <person name="Fletcher K.E."/>
            <person name="Ritalahti K.M."/>
            <person name="Loeffler F.E."/>
            <person name="Richardson P."/>
        </authorList>
    </citation>
    <scope>NUCLEOTIDE SEQUENCE [LARGE SCALE GENOMIC DNA]</scope>
    <source>
        <strain>ATCC BAA-1151 / DSM 17278 / SZ</strain>
    </source>
</reference>
<gene>
    <name evidence="1" type="primary">kdsA</name>
    <name type="ordered locus">Glov_2172</name>
</gene>
<dbReference type="EC" id="2.5.1.55" evidence="1"/>
<dbReference type="EMBL" id="CP001089">
    <property type="protein sequence ID" value="ACD95888.1"/>
    <property type="molecule type" value="Genomic_DNA"/>
</dbReference>
<dbReference type="RefSeq" id="WP_012470226.1">
    <property type="nucleotide sequence ID" value="NC_010814.1"/>
</dbReference>
<dbReference type="SMR" id="B3E467"/>
<dbReference type="STRING" id="398767.Glov_2172"/>
<dbReference type="KEGG" id="glo:Glov_2172"/>
<dbReference type="eggNOG" id="COG2877">
    <property type="taxonomic scope" value="Bacteria"/>
</dbReference>
<dbReference type="HOGENOM" id="CLU_036666_0_0_7"/>
<dbReference type="OrthoDB" id="9802281at2"/>
<dbReference type="UniPathway" id="UPA00030"/>
<dbReference type="UniPathway" id="UPA00357">
    <property type="reaction ID" value="UER00474"/>
</dbReference>
<dbReference type="Proteomes" id="UP000002420">
    <property type="component" value="Chromosome"/>
</dbReference>
<dbReference type="GO" id="GO:0005737">
    <property type="term" value="C:cytoplasm"/>
    <property type="evidence" value="ECO:0007669"/>
    <property type="project" value="UniProtKB-SubCell"/>
</dbReference>
<dbReference type="GO" id="GO:0008676">
    <property type="term" value="F:3-deoxy-8-phosphooctulonate synthase activity"/>
    <property type="evidence" value="ECO:0007669"/>
    <property type="project" value="UniProtKB-UniRule"/>
</dbReference>
<dbReference type="GO" id="GO:0019294">
    <property type="term" value="P:keto-3-deoxy-D-manno-octulosonic acid biosynthetic process"/>
    <property type="evidence" value="ECO:0007669"/>
    <property type="project" value="UniProtKB-UniRule"/>
</dbReference>
<dbReference type="Gene3D" id="3.20.20.70">
    <property type="entry name" value="Aldolase class I"/>
    <property type="match status" value="1"/>
</dbReference>
<dbReference type="HAMAP" id="MF_00056">
    <property type="entry name" value="KDO8P_synth"/>
    <property type="match status" value="1"/>
</dbReference>
<dbReference type="InterPro" id="IPR013785">
    <property type="entry name" value="Aldolase_TIM"/>
</dbReference>
<dbReference type="InterPro" id="IPR006218">
    <property type="entry name" value="DAHP1/KDSA"/>
</dbReference>
<dbReference type="InterPro" id="IPR006269">
    <property type="entry name" value="KDO8P_synthase"/>
</dbReference>
<dbReference type="NCBIfam" id="TIGR01362">
    <property type="entry name" value="KDO8P_synth"/>
    <property type="match status" value="1"/>
</dbReference>
<dbReference type="NCBIfam" id="NF003543">
    <property type="entry name" value="PRK05198.1"/>
    <property type="match status" value="1"/>
</dbReference>
<dbReference type="PANTHER" id="PTHR21057">
    <property type="entry name" value="PHOSPHO-2-DEHYDRO-3-DEOXYHEPTONATE ALDOLASE"/>
    <property type="match status" value="1"/>
</dbReference>
<dbReference type="Pfam" id="PF00793">
    <property type="entry name" value="DAHP_synth_1"/>
    <property type="match status" value="1"/>
</dbReference>
<dbReference type="SUPFAM" id="SSF51569">
    <property type="entry name" value="Aldolase"/>
    <property type="match status" value="1"/>
</dbReference>
<evidence type="ECO:0000255" key="1">
    <source>
        <dbReference type="HAMAP-Rule" id="MF_00056"/>
    </source>
</evidence>
<keyword id="KW-0963">Cytoplasm</keyword>
<keyword id="KW-0448">Lipopolysaccharide biosynthesis</keyword>
<keyword id="KW-1185">Reference proteome</keyword>
<keyword id="KW-0808">Transferase</keyword>
<protein>
    <recommendedName>
        <fullName evidence="1">2-dehydro-3-deoxyphosphooctonate aldolase</fullName>
        <ecNumber evidence="1">2.5.1.55</ecNumber>
    </recommendedName>
    <alternativeName>
        <fullName evidence="1">3-deoxy-D-manno-octulosonic acid 8-phosphate synthase</fullName>
    </alternativeName>
    <alternativeName>
        <fullName evidence="1">KDO-8-phosphate synthase</fullName>
        <shortName evidence="1">KDO 8-P synthase</shortName>
        <shortName evidence="1">KDOPS</shortName>
    </alternativeName>
    <alternativeName>
        <fullName evidence="1">Phospho-2-dehydro-3-deoxyoctonate aldolase</fullName>
    </alternativeName>
</protein>
<proteinExistence type="inferred from homology"/>
<comment type="catalytic activity">
    <reaction evidence="1">
        <text>D-arabinose 5-phosphate + phosphoenolpyruvate + H2O = 3-deoxy-alpha-D-manno-2-octulosonate-8-phosphate + phosphate</text>
        <dbReference type="Rhea" id="RHEA:14053"/>
        <dbReference type="ChEBI" id="CHEBI:15377"/>
        <dbReference type="ChEBI" id="CHEBI:43474"/>
        <dbReference type="ChEBI" id="CHEBI:57693"/>
        <dbReference type="ChEBI" id="CHEBI:58702"/>
        <dbReference type="ChEBI" id="CHEBI:85985"/>
        <dbReference type="EC" id="2.5.1.55"/>
    </reaction>
</comment>
<comment type="pathway">
    <text evidence="1">Carbohydrate biosynthesis; 3-deoxy-D-manno-octulosonate biosynthesis; 3-deoxy-D-manno-octulosonate from D-ribulose 5-phosphate: step 2/3.</text>
</comment>
<comment type="pathway">
    <text evidence="1">Bacterial outer membrane biogenesis; lipopolysaccharide biosynthesis.</text>
</comment>
<comment type="subcellular location">
    <subcellularLocation>
        <location evidence="1">Cytoplasm</location>
    </subcellularLocation>
</comment>
<comment type="similarity">
    <text evidence="1">Belongs to the KdsA family.</text>
</comment>
<feature type="chain" id="PRO_1000091817" description="2-dehydro-3-deoxyphosphooctonate aldolase">
    <location>
        <begin position="1"/>
        <end position="272"/>
    </location>
</feature>
<name>KDSA_TRIL1</name>
<organism>
    <name type="scientific">Trichlorobacter lovleyi (strain ATCC BAA-1151 / DSM 17278 / SZ)</name>
    <name type="common">Geobacter lovleyi</name>
    <dbReference type="NCBI Taxonomy" id="398767"/>
    <lineage>
        <taxon>Bacteria</taxon>
        <taxon>Pseudomonadati</taxon>
        <taxon>Thermodesulfobacteriota</taxon>
        <taxon>Desulfuromonadia</taxon>
        <taxon>Geobacterales</taxon>
        <taxon>Geobacteraceae</taxon>
        <taxon>Trichlorobacter</taxon>
    </lineage>
</organism>
<accession>B3E467</accession>